<name>RBL_SANCA</name>
<sequence>VGFKAGVKDYKLTYYTPDYETKDTDILAAFRVTPQPGVPPEEAGAAVAAESSTGTWTTVWTDGLTSLDRYKGRCYHIEPVAGEDNQYICYVAYPLDLFEEGSVTNMFTSIVGNVFGFKALRALRLEDLRIPPAYVKTFQGPPHGIQVERDKLNKYGRPLLGCTIKPKLGLSAKNYGRAVYECLRGGLDFTKDDENVNSQPFMRWRDRFLFCAEAIYKAQAETGEIKGHYLNATAGTCEEMIKRAVFARELGVPIVMHDYLTGGFTANTSLAHYCRDNGLLLHIHRAMHAVIDRQKNHGMHFRVLAKALRMSGGDHIHAGTVVGKLEGEREITLGFVDLLRDDFVEKDRSRGIYFTQDWVSLPGVLPVASGGIHVWHMPALTEIFGDDSVLQFGGGTLGHPWGNAPGAVANRVALEACVQARNEGRDLAREGNEIIR</sequence>
<protein>
    <recommendedName>
        <fullName evidence="1">Ribulose bisphosphate carboxylase large chain</fullName>
        <shortName evidence="1">RuBisCO large subunit</shortName>
        <ecNumber evidence="1">4.1.1.39</ecNumber>
    </recommendedName>
</protein>
<feature type="chain" id="PRO_0000062585" description="Ribulose bisphosphate carboxylase large chain">
    <location>
        <begin position="1" status="less than"/>
        <end position="436" status="greater than"/>
    </location>
</feature>
<feature type="active site" description="Proton acceptor" evidence="1">
    <location>
        <position position="165"/>
    </location>
</feature>
<feature type="active site" description="Proton acceptor" evidence="1">
    <location>
        <position position="284"/>
    </location>
</feature>
<feature type="binding site" description="in homodimeric partner" evidence="1">
    <location>
        <position position="113"/>
    </location>
    <ligand>
        <name>substrate</name>
    </ligand>
</feature>
<feature type="binding site" evidence="1">
    <location>
        <position position="163"/>
    </location>
    <ligand>
        <name>substrate</name>
    </ligand>
</feature>
<feature type="binding site" evidence="1">
    <location>
        <position position="167"/>
    </location>
    <ligand>
        <name>substrate</name>
    </ligand>
</feature>
<feature type="binding site" description="via carbamate group" evidence="1">
    <location>
        <position position="191"/>
    </location>
    <ligand>
        <name>Mg(2+)</name>
        <dbReference type="ChEBI" id="CHEBI:18420"/>
    </ligand>
</feature>
<feature type="binding site" evidence="1">
    <location>
        <position position="193"/>
    </location>
    <ligand>
        <name>Mg(2+)</name>
        <dbReference type="ChEBI" id="CHEBI:18420"/>
    </ligand>
</feature>
<feature type="binding site" evidence="1">
    <location>
        <position position="194"/>
    </location>
    <ligand>
        <name>Mg(2+)</name>
        <dbReference type="ChEBI" id="CHEBI:18420"/>
    </ligand>
</feature>
<feature type="binding site" evidence="1">
    <location>
        <position position="285"/>
    </location>
    <ligand>
        <name>substrate</name>
    </ligand>
</feature>
<feature type="binding site" evidence="1">
    <location>
        <position position="317"/>
    </location>
    <ligand>
        <name>substrate</name>
    </ligand>
</feature>
<feature type="binding site" evidence="1">
    <location>
        <position position="369"/>
    </location>
    <ligand>
        <name>substrate</name>
    </ligand>
</feature>
<feature type="site" description="Transition state stabilizer" evidence="1">
    <location>
        <position position="324"/>
    </location>
</feature>
<feature type="modified residue" description="N6,N6,N6-trimethyllysine" evidence="1">
    <location>
        <position position="4"/>
    </location>
</feature>
<feature type="modified residue" description="N6-carboxylysine" evidence="1">
    <location>
        <position position="191"/>
    </location>
</feature>
<feature type="disulfide bond" description="Interchain; in linked form" evidence="1">
    <location>
        <position position="237"/>
    </location>
</feature>
<feature type="non-terminal residue">
    <location>
        <position position="1"/>
    </location>
</feature>
<feature type="non-terminal residue">
    <location>
        <position position="436"/>
    </location>
</feature>
<gene>
    <name evidence="1" type="primary">rbcL</name>
</gene>
<geneLocation type="chloroplast"/>
<evidence type="ECO:0000255" key="1">
    <source>
        <dbReference type="HAMAP-Rule" id="MF_01338"/>
    </source>
</evidence>
<reference key="1">
    <citation type="journal article" date="1992" name="Science">
        <title>Carnivorous plants: phylogeny and structural evolution.</title>
        <authorList>
            <person name="Albert V.A."/>
            <person name="Williams S.E."/>
            <person name="Chase M.W."/>
        </authorList>
    </citation>
    <scope>NUCLEOTIDE SEQUENCE [GENOMIC DNA]</scope>
</reference>
<keyword id="KW-0113">Calvin cycle</keyword>
<keyword id="KW-0120">Carbon dioxide fixation</keyword>
<keyword id="KW-0150">Chloroplast</keyword>
<keyword id="KW-1015">Disulfide bond</keyword>
<keyword id="KW-0456">Lyase</keyword>
<keyword id="KW-0460">Magnesium</keyword>
<keyword id="KW-0479">Metal-binding</keyword>
<keyword id="KW-0488">Methylation</keyword>
<keyword id="KW-0503">Monooxygenase</keyword>
<keyword id="KW-0560">Oxidoreductase</keyword>
<keyword id="KW-0601">Photorespiration</keyword>
<keyword id="KW-0602">Photosynthesis</keyword>
<keyword id="KW-0934">Plastid</keyword>
<dbReference type="EC" id="4.1.1.39" evidence="1"/>
<dbReference type="EMBL" id="L01951">
    <property type="protein sequence ID" value="AAA84625.2"/>
    <property type="molecule type" value="Genomic_DNA"/>
</dbReference>
<dbReference type="SMR" id="P28450"/>
<dbReference type="GO" id="GO:0009507">
    <property type="term" value="C:chloroplast"/>
    <property type="evidence" value="ECO:0007669"/>
    <property type="project" value="UniProtKB-SubCell"/>
</dbReference>
<dbReference type="GO" id="GO:0000287">
    <property type="term" value="F:magnesium ion binding"/>
    <property type="evidence" value="ECO:0007669"/>
    <property type="project" value="InterPro"/>
</dbReference>
<dbReference type="GO" id="GO:0004497">
    <property type="term" value="F:monooxygenase activity"/>
    <property type="evidence" value="ECO:0007669"/>
    <property type="project" value="UniProtKB-KW"/>
</dbReference>
<dbReference type="GO" id="GO:0016984">
    <property type="term" value="F:ribulose-bisphosphate carboxylase activity"/>
    <property type="evidence" value="ECO:0007669"/>
    <property type="project" value="UniProtKB-EC"/>
</dbReference>
<dbReference type="GO" id="GO:0009853">
    <property type="term" value="P:photorespiration"/>
    <property type="evidence" value="ECO:0007669"/>
    <property type="project" value="UniProtKB-KW"/>
</dbReference>
<dbReference type="GO" id="GO:0019253">
    <property type="term" value="P:reductive pentose-phosphate cycle"/>
    <property type="evidence" value="ECO:0007669"/>
    <property type="project" value="UniProtKB-KW"/>
</dbReference>
<dbReference type="CDD" id="cd08212">
    <property type="entry name" value="RuBisCO_large_I"/>
    <property type="match status" value="1"/>
</dbReference>
<dbReference type="FunFam" id="3.20.20.110:FF:000003">
    <property type="entry name" value="Ribulose bisphosphate carboxylase large chain"/>
    <property type="match status" value="1"/>
</dbReference>
<dbReference type="FunFam" id="3.30.70.150:FF:000001">
    <property type="entry name" value="Ribulose bisphosphate carboxylase large chain"/>
    <property type="match status" value="1"/>
</dbReference>
<dbReference type="Gene3D" id="3.20.20.110">
    <property type="entry name" value="Ribulose bisphosphate carboxylase, large subunit, C-terminal domain"/>
    <property type="match status" value="1"/>
</dbReference>
<dbReference type="Gene3D" id="3.30.70.150">
    <property type="entry name" value="RuBisCO large subunit, N-terminal domain"/>
    <property type="match status" value="1"/>
</dbReference>
<dbReference type="HAMAP" id="MF_01338">
    <property type="entry name" value="RuBisCO_L_type1"/>
    <property type="match status" value="1"/>
</dbReference>
<dbReference type="InterPro" id="IPR033966">
    <property type="entry name" value="RuBisCO"/>
</dbReference>
<dbReference type="InterPro" id="IPR020878">
    <property type="entry name" value="RuBisCo_large_chain_AS"/>
</dbReference>
<dbReference type="InterPro" id="IPR000685">
    <property type="entry name" value="RuBisCO_lsu_C"/>
</dbReference>
<dbReference type="InterPro" id="IPR036376">
    <property type="entry name" value="RuBisCO_lsu_C_sf"/>
</dbReference>
<dbReference type="InterPro" id="IPR017443">
    <property type="entry name" value="RuBisCO_lsu_fd_N"/>
</dbReference>
<dbReference type="InterPro" id="IPR036422">
    <property type="entry name" value="RuBisCO_lsu_N_sf"/>
</dbReference>
<dbReference type="InterPro" id="IPR020888">
    <property type="entry name" value="RuBisCO_lsuI"/>
</dbReference>
<dbReference type="NCBIfam" id="NF003252">
    <property type="entry name" value="PRK04208.1"/>
    <property type="match status" value="1"/>
</dbReference>
<dbReference type="PANTHER" id="PTHR42704">
    <property type="entry name" value="RIBULOSE BISPHOSPHATE CARBOXYLASE"/>
    <property type="match status" value="1"/>
</dbReference>
<dbReference type="PANTHER" id="PTHR42704:SF15">
    <property type="entry name" value="RIBULOSE BISPHOSPHATE CARBOXYLASE LARGE CHAIN"/>
    <property type="match status" value="1"/>
</dbReference>
<dbReference type="Pfam" id="PF00016">
    <property type="entry name" value="RuBisCO_large"/>
    <property type="match status" value="1"/>
</dbReference>
<dbReference type="Pfam" id="PF02788">
    <property type="entry name" value="RuBisCO_large_N"/>
    <property type="match status" value="1"/>
</dbReference>
<dbReference type="SFLD" id="SFLDG01052">
    <property type="entry name" value="RuBisCO"/>
    <property type="match status" value="1"/>
</dbReference>
<dbReference type="SFLD" id="SFLDS00014">
    <property type="entry name" value="RuBisCO"/>
    <property type="match status" value="1"/>
</dbReference>
<dbReference type="SFLD" id="SFLDG00301">
    <property type="entry name" value="RuBisCO-like_proteins"/>
    <property type="match status" value="1"/>
</dbReference>
<dbReference type="SUPFAM" id="SSF51649">
    <property type="entry name" value="RuBisCo, C-terminal domain"/>
    <property type="match status" value="1"/>
</dbReference>
<dbReference type="SUPFAM" id="SSF54966">
    <property type="entry name" value="RuBisCO, large subunit, small (N-terminal) domain"/>
    <property type="match status" value="1"/>
</dbReference>
<dbReference type="PROSITE" id="PS00157">
    <property type="entry name" value="RUBISCO_LARGE"/>
    <property type="match status" value="1"/>
</dbReference>
<organism>
    <name type="scientific">Sanguinaria canadensis</name>
    <name type="common">Bloodroot</name>
    <dbReference type="NCBI Taxonomy" id="3472"/>
    <lineage>
        <taxon>Eukaryota</taxon>
        <taxon>Viridiplantae</taxon>
        <taxon>Streptophyta</taxon>
        <taxon>Embryophyta</taxon>
        <taxon>Tracheophyta</taxon>
        <taxon>Spermatophyta</taxon>
        <taxon>Magnoliopsida</taxon>
        <taxon>Ranunculales</taxon>
        <taxon>Papaveraceae</taxon>
        <taxon>Papaveroideae</taxon>
        <taxon>Sanguinaria</taxon>
    </lineage>
</organism>
<proteinExistence type="inferred from homology"/>
<comment type="function">
    <text evidence="1">RuBisCO catalyzes two reactions: the carboxylation of D-ribulose 1,5-bisphosphate, the primary event in carbon dioxide fixation, as well as the oxidative fragmentation of the pentose substrate in the photorespiration process. Both reactions occur simultaneously and in competition at the same active site.</text>
</comment>
<comment type="catalytic activity">
    <reaction evidence="1">
        <text>2 (2R)-3-phosphoglycerate + 2 H(+) = D-ribulose 1,5-bisphosphate + CO2 + H2O</text>
        <dbReference type="Rhea" id="RHEA:23124"/>
        <dbReference type="ChEBI" id="CHEBI:15377"/>
        <dbReference type="ChEBI" id="CHEBI:15378"/>
        <dbReference type="ChEBI" id="CHEBI:16526"/>
        <dbReference type="ChEBI" id="CHEBI:57870"/>
        <dbReference type="ChEBI" id="CHEBI:58272"/>
        <dbReference type="EC" id="4.1.1.39"/>
    </reaction>
</comment>
<comment type="catalytic activity">
    <reaction evidence="1">
        <text>D-ribulose 1,5-bisphosphate + O2 = 2-phosphoglycolate + (2R)-3-phosphoglycerate + 2 H(+)</text>
        <dbReference type="Rhea" id="RHEA:36631"/>
        <dbReference type="ChEBI" id="CHEBI:15378"/>
        <dbReference type="ChEBI" id="CHEBI:15379"/>
        <dbReference type="ChEBI" id="CHEBI:57870"/>
        <dbReference type="ChEBI" id="CHEBI:58033"/>
        <dbReference type="ChEBI" id="CHEBI:58272"/>
    </reaction>
</comment>
<comment type="cofactor">
    <cofactor evidence="1">
        <name>Mg(2+)</name>
        <dbReference type="ChEBI" id="CHEBI:18420"/>
    </cofactor>
    <text evidence="1">Binds 1 Mg(2+) ion per subunit.</text>
</comment>
<comment type="subunit">
    <text evidence="1">Heterohexadecamer of 8 large chains and 8 small chains; disulfide-linked. The disulfide link is formed within the large subunit homodimers.</text>
</comment>
<comment type="subcellular location">
    <subcellularLocation>
        <location>Plastid</location>
        <location>Chloroplast</location>
    </subcellularLocation>
</comment>
<comment type="PTM">
    <text evidence="1">The disulfide bond which can form in the large chain dimeric partners within the hexadecamer appears to be associated with oxidative stress and protein turnover.</text>
</comment>
<comment type="miscellaneous">
    <text evidence="1">The basic functional RuBisCO is composed of a large chain homodimer in a 'head-to-tail' conformation. In form I RuBisCO this homodimer is arranged in a barrel-like tetramer with the small subunits forming a tetrameric 'cap' on each end of the 'barrel'.</text>
</comment>
<comment type="similarity">
    <text evidence="1">Belongs to the RuBisCO large chain family. Type I subfamily.</text>
</comment>
<accession>P28450</accession>